<reference key="1">
    <citation type="journal article" date="2009" name="J. Bacteriol.">
        <title>Genome sequence of Azotobacter vinelandii, an obligate aerobe specialized to support diverse anaerobic metabolic processes.</title>
        <authorList>
            <person name="Setubal J.C."/>
            <person name="Dos Santos P."/>
            <person name="Goldman B.S."/>
            <person name="Ertesvaag H."/>
            <person name="Espin G."/>
            <person name="Rubio L.M."/>
            <person name="Valla S."/>
            <person name="Almeida N.F."/>
            <person name="Balasubramanian D."/>
            <person name="Cromes L."/>
            <person name="Curatti L."/>
            <person name="Du Z."/>
            <person name="Godsy E."/>
            <person name="Goodner B."/>
            <person name="Hellner-Burris K."/>
            <person name="Hernandez J.A."/>
            <person name="Houmiel K."/>
            <person name="Imperial J."/>
            <person name="Kennedy C."/>
            <person name="Larson T.J."/>
            <person name="Latreille P."/>
            <person name="Ligon L.S."/>
            <person name="Lu J."/>
            <person name="Maerk M."/>
            <person name="Miller N.M."/>
            <person name="Norton S."/>
            <person name="O'Carroll I.P."/>
            <person name="Paulsen I."/>
            <person name="Raulfs E.C."/>
            <person name="Roemer R."/>
            <person name="Rosser J."/>
            <person name="Segura D."/>
            <person name="Slater S."/>
            <person name="Stricklin S.L."/>
            <person name="Studholme D.J."/>
            <person name="Sun J."/>
            <person name="Viana C.J."/>
            <person name="Wallin E."/>
            <person name="Wang B."/>
            <person name="Wheeler C."/>
            <person name="Zhu H."/>
            <person name="Dean D.R."/>
            <person name="Dixon R."/>
            <person name="Wood D."/>
        </authorList>
    </citation>
    <scope>NUCLEOTIDE SEQUENCE [LARGE SCALE GENOMIC DNA]</scope>
    <source>
        <strain>DJ / ATCC BAA-1303</strain>
    </source>
</reference>
<evidence type="ECO:0000255" key="1">
    <source>
        <dbReference type="HAMAP-Rule" id="MF_01343"/>
    </source>
</evidence>
<evidence type="ECO:0000305" key="2"/>
<comment type="function">
    <text evidence="1">One of the primary rRNA binding proteins, it binds directly to 16S rRNA where it helps nucleate assembly of the platform of the 30S subunit by binding and bridging several RNA helices of the 16S rRNA.</text>
</comment>
<comment type="function">
    <text evidence="1">Forms an intersubunit bridge (bridge B4) with the 23S rRNA of the 50S subunit in the ribosome.</text>
</comment>
<comment type="subunit">
    <text evidence="1">Part of the 30S ribosomal subunit. Forms a bridge to the 50S subunit in the 70S ribosome, contacting the 23S rRNA.</text>
</comment>
<comment type="similarity">
    <text evidence="1">Belongs to the universal ribosomal protein uS15 family.</text>
</comment>
<protein>
    <recommendedName>
        <fullName evidence="1">Small ribosomal subunit protein uS15</fullName>
    </recommendedName>
    <alternativeName>
        <fullName evidence="2">30S ribosomal protein S15</fullName>
    </alternativeName>
</protein>
<gene>
    <name evidence="1" type="primary">rpsO</name>
    <name type="ordered locus">Avin_42790</name>
</gene>
<sequence length="89" mass="10176">MALTVEEKAQIVNEYKQAEGDTGSPEVQVALLTANINKLQDHFKANGKDHHSRRGLIRMVNQRRKLLDYLKGKDTTRYSTLIGRLGLRR</sequence>
<feature type="chain" id="PRO_1000214749" description="Small ribosomal subunit protein uS15">
    <location>
        <begin position="1"/>
        <end position="89"/>
    </location>
</feature>
<name>RS15_AZOVD</name>
<dbReference type="EMBL" id="CP001157">
    <property type="protein sequence ID" value="ACO80402.1"/>
    <property type="molecule type" value="Genomic_DNA"/>
</dbReference>
<dbReference type="RefSeq" id="WP_012702770.1">
    <property type="nucleotide sequence ID" value="NC_012560.1"/>
</dbReference>
<dbReference type="SMR" id="C1DFK6"/>
<dbReference type="STRING" id="322710.Avin_42790"/>
<dbReference type="EnsemblBacteria" id="ACO80402">
    <property type="protein sequence ID" value="ACO80402"/>
    <property type="gene ID" value="Avin_42790"/>
</dbReference>
<dbReference type="GeneID" id="88187193"/>
<dbReference type="KEGG" id="avn:Avin_42790"/>
<dbReference type="eggNOG" id="COG0184">
    <property type="taxonomic scope" value="Bacteria"/>
</dbReference>
<dbReference type="HOGENOM" id="CLU_148518_0_0_6"/>
<dbReference type="OrthoDB" id="9799262at2"/>
<dbReference type="Proteomes" id="UP000002424">
    <property type="component" value="Chromosome"/>
</dbReference>
<dbReference type="GO" id="GO:0022627">
    <property type="term" value="C:cytosolic small ribosomal subunit"/>
    <property type="evidence" value="ECO:0007669"/>
    <property type="project" value="TreeGrafter"/>
</dbReference>
<dbReference type="GO" id="GO:0019843">
    <property type="term" value="F:rRNA binding"/>
    <property type="evidence" value="ECO:0007669"/>
    <property type="project" value="UniProtKB-UniRule"/>
</dbReference>
<dbReference type="GO" id="GO:0003735">
    <property type="term" value="F:structural constituent of ribosome"/>
    <property type="evidence" value="ECO:0007669"/>
    <property type="project" value="InterPro"/>
</dbReference>
<dbReference type="GO" id="GO:0006412">
    <property type="term" value="P:translation"/>
    <property type="evidence" value="ECO:0007669"/>
    <property type="project" value="UniProtKB-UniRule"/>
</dbReference>
<dbReference type="CDD" id="cd00353">
    <property type="entry name" value="Ribosomal_S15p_S13e"/>
    <property type="match status" value="1"/>
</dbReference>
<dbReference type="FunFam" id="1.10.287.10:FF:000002">
    <property type="entry name" value="30S ribosomal protein S15"/>
    <property type="match status" value="1"/>
</dbReference>
<dbReference type="Gene3D" id="6.10.250.3130">
    <property type="match status" value="1"/>
</dbReference>
<dbReference type="Gene3D" id="1.10.287.10">
    <property type="entry name" value="S15/NS1, RNA-binding"/>
    <property type="match status" value="1"/>
</dbReference>
<dbReference type="HAMAP" id="MF_01343_B">
    <property type="entry name" value="Ribosomal_uS15_B"/>
    <property type="match status" value="1"/>
</dbReference>
<dbReference type="InterPro" id="IPR000589">
    <property type="entry name" value="Ribosomal_uS15"/>
</dbReference>
<dbReference type="InterPro" id="IPR005290">
    <property type="entry name" value="Ribosomal_uS15_bac-type"/>
</dbReference>
<dbReference type="InterPro" id="IPR009068">
    <property type="entry name" value="uS15_NS1_RNA-bd_sf"/>
</dbReference>
<dbReference type="NCBIfam" id="TIGR00952">
    <property type="entry name" value="S15_bact"/>
    <property type="match status" value="1"/>
</dbReference>
<dbReference type="PANTHER" id="PTHR23321">
    <property type="entry name" value="RIBOSOMAL PROTEIN S15, BACTERIAL AND ORGANELLAR"/>
    <property type="match status" value="1"/>
</dbReference>
<dbReference type="PANTHER" id="PTHR23321:SF26">
    <property type="entry name" value="SMALL RIBOSOMAL SUBUNIT PROTEIN US15M"/>
    <property type="match status" value="1"/>
</dbReference>
<dbReference type="Pfam" id="PF00312">
    <property type="entry name" value="Ribosomal_S15"/>
    <property type="match status" value="1"/>
</dbReference>
<dbReference type="SMART" id="SM01387">
    <property type="entry name" value="Ribosomal_S15"/>
    <property type="match status" value="1"/>
</dbReference>
<dbReference type="SUPFAM" id="SSF47060">
    <property type="entry name" value="S15/NS1 RNA-binding domain"/>
    <property type="match status" value="1"/>
</dbReference>
<dbReference type="PROSITE" id="PS00362">
    <property type="entry name" value="RIBOSOMAL_S15"/>
    <property type="match status" value="1"/>
</dbReference>
<accession>C1DFK6</accession>
<keyword id="KW-0687">Ribonucleoprotein</keyword>
<keyword id="KW-0689">Ribosomal protein</keyword>
<keyword id="KW-0694">RNA-binding</keyword>
<keyword id="KW-0699">rRNA-binding</keyword>
<proteinExistence type="inferred from homology"/>
<organism>
    <name type="scientific">Azotobacter vinelandii (strain DJ / ATCC BAA-1303)</name>
    <dbReference type="NCBI Taxonomy" id="322710"/>
    <lineage>
        <taxon>Bacteria</taxon>
        <taxon>Pseudomonadati</taxon>
        <taxon>Pseudomonadota</taxon>
        <taxon>Gammaproteobacteria</taxon>
        <taxon>Pseudomonadales</taxon>
        <taxon>Pseudomonadaceae</taxon>
        <taxon>Azotobacter</taxon>
    </lineage>
</organism>